<feature type="chain" id="PRO_0000060946" description="Cytochrome b">
    <location>
        <begin position="1"/>
        <end position="371"/>
    </location>
</feature>
<feature type="transmembrane region" description="Helical" evidence="2">
    <location>
        <begin position="25"/>
        <end position="45"/>
    </location>
</feature>
<feature type="transmembrane region" description="Helical" evidence="2">
    <location>
        <begin position="69"/>
        <end position="90"/>
    </location>
</feature>
<feature type="transmembrane region" description="Helical" evidence="2">
    <location>
        <begin position="105"/>
        <end position="125"/>
    </location>
</feature>
<feature type="transmembrane region" description="Helical" evidence="2">
    <location>
        <begin position="170"/>
        <end position="190"/>
    </location>
</feature>
<feature type="transmembrane region" description="Helical" evidence="2">
    <location>
        <begin position="218"/>
        <end position="238"/>
    </location>
</feature>
<feature type="transmembrane region" description="Helical" evidence="2">
    <location>
        <begin position="280"/>
        <end position="300"/>
    </location>
</feature>
<feature type="transmembrane region" description="Helical" evidence="2">
    <location>
        <begin position="312"/>
        <end position="332"/>
    </location>
</feature>
<feature type="transmembrane region" description="Helical" evidence="2">
    <location>
        <begin position="339"/>
        <end position="358"/>
    </location>
</feature>
<feature type="binding site" description="axial binding residue" evidence="2">
    <location>
        <position position="75"/>
    </location>
    <ligand>
        <name>heme b</name>
        <dbReference type="ChEBI" id="CHEBI:60344"/>
        <label>b562</label>
    </ligand>
    <ligandPart>
        <name>Fe</name>
        <dbReference type="ChEBI" id="CHEBI:18248"/>
    </ligandPart>
</feature>
<feature type="binding site" description="axial binding residue" evidence="2">
    <location>
        <position position="89"/>
    </location>
    <ligand>
        <name>heme b</name>
        <dbReference type="ChEBI" id="CHEBI:60344"/>
        <label>b566</label>
    </ligand>
    <ligandPart>
        <name>Fe</name>
        <dbReference type="ChEBI" id="CHEBI:18248"/>
    </ligandPart>
</feature>
<feature type="binding site" description="axial binding residue" evidence="2">
    <location>
        <position position="174"/>
    </location>
    <ligand>
        <name>heme b</name>
        <dbReference type="ChEBI" id="CHEBI:60344"/>
        <label>b562</label>
    </ligand>
    <ligandPart>
        <name>Fe</name>
        <dbReference type="ChEBI" id="CHEBI:18248"/>
    </ligandPart>
</feature>
<feature type="binding site" description="axial binding residue" evidence="2">
    <location>
        <position position="188"/>
    </location>
    <ligand>
        <name>heme b</name>
        <dbReference type="ChEBI" id="CHEBI:60344"/>
        <label>b566</label>
    </ligand>
    <ligandPart>
        <name>Fe</name>
        <dbReference type="ChEBI" id="CHEBI:18248"/>
    </ligandPart>
</feature>
<feature type="binding site" evidence="2">
    <location>
        <position position="193"/>
    </location>
    <ligand>
        <name>a ubiquinone</name>
        <dbReference type="ChEBI" id="CHEBI:16389"/>
    </ligand>
</feature>
<organism>
    <name type="scientific">Eryx miliaris</name>
    <name type="common">Desert sand boa</name>
    <dbReference type="NCBI Taxonomy" id="51871"/>
    <lineage>
        <taxon>Eukaryota</taxon>
        <taxon>Metazoa</taxon>
        <taxon>Chordata</taxon>
        <taxon>Craniata</taxon>
        <taxon>Vertebrata</taxon>
        <taxon>Euteleostomi</taxon>
        <taxon>Lepidosauria</taxon>
        <taxon>Squamata</taxon>
        <taxon>Bifurcata</taxon>
        <taxon>Unidentata</taxon>
        <taxon>Episquamata</taxon>
        <taxon>Toxicofera</taxon>
        <taxon>Serpentes</taxon>
        <taxon>Henophidia</taxon>
        <taxon>Boidae</taxon>
        <taxon>Erycinae</taxon>
        <taxon>Eryx</taxon>
    </lineage>
</organism>
<keyword id="KW-0249">Electron transport</keyword>
<keyword id="KW-0349">Heme</keyword>
<keyword id="KW-0408">Iron</keyword>
<keyword id="KW-0472">Membrane</keyword>
<keyword id="KW-0479">Metal-binding</keyword>
<keyword id="KW-0496">Mitochondrion</keyword>
<keyword id="KW-0999">Mitochondrion inner membrane</keyword>
<keyword id="KW-0679">Respiratory chain</keyword>
<keyword id="KW-0812">Transmembrane</keyword>
<keyword id="KW-1133">Transmembrane helix</keyword>
<keyword id="KW-0813">Transport</keyword>
<keyword id="KW-0830">Ubiquinone</keyword>
<evidence type="ECO:0000250" key="1"/>
<evidence type="ECO:0000250" key="2">
    <source>
        <dbReference type="UniProtKB" id="P00157"/>
    </source>
</evidence>
<evidence type="ECO:0000255" key="3">
    <source>
        <dbReference type="PROSITE-ProRule" id="PRU00967"/>
    </source>
</evidence>
<evidence type="ECO:0000255" key="4">
    <source>
        <dbReference type="PROSITE-ProRule" id="PRU00968"/>
    </source>
</evidence>
<protein>
    <recommendedName>
        <fullName>Cytochrome b</fullName>
    </recommendedName>
    <alternativeName>
        <fullName>Complex III subunit 3</fullName>
    </alternativeName>
    <alternativeName>
        <fullName>Complex III subunit III</fullName>
    </alternativeName>
    <alternativeName>
        <fullName>Cytochrome b-c1 complex subunit 3</fullName>
    </alternativeName>
    <alternativeName>
        <fullName>Ubiquinol-cytochrome-c reductase complex cytochrome b subunit</fullName>
    </alternativeName>
</protein>
<dbReference type="EMBL" id="U69824">
    <property type="protein sequence ID" value="AAC01841.1"/>
    <property type="molecule type" value="Genomic_DNA"/>
</dbReference>
<dbReference type="SMR" id="O48079"/>
<dbReference type="GO" id="GO:0005743">
    <property type="term" value="C:mitochondrial inner membrane"/>
    <property type="evidence" value="ECO:0007669"/>
    <property type="project" value="UniProtKB-SubCell"/>
</dbReference>
<dbReference type="GO" id="GO:0045275">
    <property type="term" value="C:respiratory chain complex III"/>
    <property type="evidence" value="ECO:0007669"/>
    <property type="project" value="InterPro"/>
</dbReference>
<dbReference type="GO" id="GO:0046872">
    <property type="term" value="F:metal ion binding"/>
    <property type="evidence" value="ECO:0007669"/>
    <property type="project" value="UniProtKB-KW"/>
</dbReference>
<dbReference type="GO" id="GO:0008121">
    <property type="term" value="F:ubiquinol-cytochrome-c reductase activity"/>
    <property type="evidence" value="ECO:0007669"/>
    <property type="project" value="InterPro"/>
</dbReference>
<dbReference type="GO" id="GO:0006122">
    <property type="term" value="P:mitochondrial electron transport, ubiquinol to cytochrome c"/>
    <property type="evidence" value="ECO:0007669"/>
    <property type="project" value="TreeGrafter"/>
</dbReference>
<dbReference type="CDD" id="cd00290">
    <property type="entry name" value="cytochrome_b_C"/>
    <property type="match status" value="1"/>
</dbReference>
<dbReference type="CDD" id="cd00284">
    <property type="entry name" value="Cytochrome_b_N"/>
    <property type="match status" value="1"/>
</dbReference>
<dbReference type="Gene3D" id="1.20.810.10">
    <property type="entry name" value="Cytochrome Bc1 Complex, Chain C"/>
    <property type="match status" value="1"/>
</dbReference>
<dbReference type="InterPro" id="IPR005798">
    <property type="entry name" value="Cyt_b/b6_C"/>
</dbReference>
<dbReference type="InterPro" id="IPR036150">
    <property type="entry name" value="Cyt_b/b6_C_sf"/>
</dbReference>
<dbReference type="InterPro" id="IPR005797">
    <property type="entry name" value="Cyt_b/b6_N"/>
</dbReference>
<dbReference type="InterPro" id="IPR027387">
    <property type="entry name" value="Cytb/b6-like_sf"/>
</dbReference>
<dbReference type="InterPro" id="IPR030689">
    <property type="entry name" value="Cytochrome_b"/>
</dbReference>
<dbReference type="InterPro" id="IPR048260">
    <property type="entry name" value="Cytochrome_b_C_euk/bac"/>
</dbReference>
<dbReference type="InterPro" id="IPR048259">
    <property type="entry name" value="Cytochrome_b_N_euk/bac"/>
</dbReference>
<dbReference type="InterPro" id="IPR016174">
    <property type="entry name" value="Di-haem_cyt_TM"/>
</dbReference>
<dbReference type="PANTHER" id="PTHR19271">
    <property type="entry name" value="CYTOCHROME B"/>
    <property type="match status" value="1"/>
</dbReference>
<dbReference type="PANTHER" id="PTHR19271:SF16">
    <property type="entry name" value="CYTOCHROME B"/>
    <property type="match status" value="1"/>
</dbReference>
<dbReference type="Pfam" id="PF00032">
    <property type="entry name" value="Cytochrom_B_C"/>
    <property type="match status" value="1"/>
</dbReference>
<dbReference type="Pfam" id="PF00033">
    <property type="entry name" value="Cytochrome_B"/>
    <property type="match status" value="1"/>
</dbReference>
<dbReference type="PIRSF" id="PIRSF038885">
    <property type="entry name" value="COB"/>
    <property type="match status" value="1"/>
</dbReference>
<dbReference type="SUPFAM" id="SSF81648">
    <property type="entry name" value="a domain/subunit of cytochrome bc1 complex (Ubiquinol-cytochrome c reductase)"/>
    <property type="match status" value="1"/>
</dbReference>
<dbReference type="SUPFAM" id="SSF81342">
    <property type="entry name" value="Transmembrane di-heme cytochromes"/>
    <property type="match status" value="1"/>
</dbReference>
<dbReference type="PROSITE" id="PS51003">
    <property type="entry name" value="CYTB_CTER"/>
    <property type="match status" value="1"/>
</dbReference>
<dbReference type="PROSITE" id="PS51002">
    <property type="entry name" value="CYTB_NTER"/>
    <property type="match status" value="1"/>
</dbReference>
<sequence length="371" mass="42124">MPHQQMLILFGLLPVATNISTWWNFGSMLLACSSMQVLTGFFLAVHYTANINLAFSSIVHITRDVPYGWMMQNLHAIGASMFFICIYIHIARGLYYGSYLNKKTWLSGTTLLIMLMATAFFGYVLPWGQMSFWAATVITNLLTAIPYLGTTMTTWLWGGFAINDPTLTRFFALHFILPFGIISLSSLHIMLLHEDGSSNPLGTNSDIDKIPFHPYHTYKDLLMLSLMVLMLLMTVSFLPDIFNDPENFSKANPLVTPQHIKPEWYFLFAYGILRSILNKLGGALALAMSIMILLTIPFTHTSNIRSMMFRPIMQLMFWTLVATFMVITWAATKPVEPPFTMISQIASTINFLFLIMNPIAGWIENNIMKYN</sequence>
<geneLocation type="mitochondrion"/>
<reference key="1">
    <citation type="thesis" date="1997" institute="Queen's University / Kingston" country="Canada">
        <title>Hic Sunt Serpentes -- molecular phylogenetics and the Boidae (Serpentes: Booidea).</title>
        <authorList>
            <person name="Campbell B.N."/>
        </authorList>
    </citation>
    <scope>NUCLEOTIDE SEQUENCE [GENOMIC DNA]</scope>
</reference>
<comment type="function">
    <text evidence="2">Component of the ubiquinol-cytochrome c reductase complex (complex III or cytochrome b-c1 complex) that is part of the mitochondrial respiratory chain. The b-c1 complex mediates electron transfer from ubiquinol to cytochrome c. Contributes to the generation of a proton gradient across the mitochondrial membrane that is then used for ATP synthesis.</text>
</comment>
<comment type="cofactor">
    <cofactor evidence="2">
        <name>heme b</name>
        <dbReference type="ChEBI" id="CHEBI:60344"/>
    </cofactor>
    <text evidence="2">Binds 2 heme b groups non-covalently.</text>
</comment>
<comment type="subunit">
    <text evidence="2">The cytochrome bc1 complex contains 3 respiratory subunits (MT-CYB, CYC1 and UQCRFS1), 2 core proteins (UQCRC1 and UQCRC2) and probably 6 low-molecular weight proteins.</text>
</comment>
<comment type="subcellular location">
    <subcellularLocation>
        <location evidence="2">Mitochondrion inner membrane</location>
        <topology evidence="2">Multi-pass membrane protein</topology>
    </subcellularLocation>
</comment>
<comment type="miscellaneous">
    <text evidence="1">Heme 1 (or BL or b562) is low-potential and absorbs at about 562 nm, and heme 2 (or BH or b566) is high-potential and absorbs at about 566 nm.</text>
</comment>
<comment type="similarity">
    <text evidence="3 4">Belongs to the cytochrome b family.</text>
</comment>
<comment type="caution">
    <text evidence="2">The full-length protein contains only eight transmembrane helices, not nine as predicted by bioinformatics tools.</text>
</comment>
<name>CYB_ERYMI</name>
<proteinExistence type="inferred from homology"/>
<accession>O48079</accession>
<gene>
    <name type="primary">MT-CYB</name>
    <name type="synonym">COB</name>
    <name type="synonym">CYTB</name>
    <name type="synonym">MTCYB</name>
</gene>